<accession>Q6G5W5</accession>
<feature type="chain" id="PRO_0000117177" description="tRNA uridine 5-carboxymethylaminomethyl modification enzyme MnmG">
    <location>
        <begin position="1"/>
        <end position="625"/>
    </location>
</feature>
<feature type="binding site" evidence="1">
    <location>
        <begin position="11"/>
        <end position="16"/>
    </location>
    <ligand>
        <name>FAD</name>
        <dbReference type="ChEBI" id="CHEBI:57692"/>
    </ligand>
</feature>
<feature type="binding site" evidence="1">
    <location>
        <position position="123"/>
    </location>
    <ligand>
        <name>FAD</name>
        <dbReference type="ChEBI" id="CHEBI:57692"/>
    </ligand>
</feature>
<feature type="binding site" evidence="1">
    <location>
        <position position="178"/>
    </location>
    <ligand>
        <name>FAD</name>
        <dbReference type="ChEBI" id="CHEBI:57692"/>
    </ligand>
</feature>
<feature type="binding site" evidence="1">
    <location>
        <begin position="270"/>
        <end position="284"/>
    </location>
    <ligand>
        <name>NAD(+)</name>
        <dbReference type="ChEBI" id="CHEBI:57540"/>
    </ligand>
</feature>
<feature type="binding site" evidence="1">
    <location>
        <position position="367"/>
    </location>
    <ligand>
        <name>FAD</name>
        <dbReference type="ChEBI" id="CHEBI:57692"/>
    </ligand>
</feature>
<organism>
    <name type="scientific">Staphylococcus aureus (strain MSSA476)</name>
    <dbReference type="NCBI Taxonomy" id="282459"/>
    <lineage>
        <taxon>Bacteria</taxon>
        <taxon>Bacillati</taxon>
        <taxon>Bacillota</taxon>
        <taxon>Bacilli</taxon>
        <taxon>Bacillales</taxon>
        <taxon>Staphylococcaceae</taxon>
        <taxon>Staphylococcus</taxon>
    </lineage>
</organism>
<reference key="1">
    <citation type="journal article" date="2004" name="Proc. Natl. Acad. Sci. U.S.A.">
        <title>Complete genomes of two clinical Staphylococcus aureus strains: evidence for the rapid evolution of virulence and drug resistance.</title>
        <authorList>
            <person name="Holden M.T.G."/>
            <person name="Feil E.J."/>
            <person name="Lindsay J.A."/>
            <person name="Peacock S.J."/>
            <person name="Day N.P.J."/>
            <person name="Enright M.C."/>
            <person name="Foster T.J."/>
            <person name="Moore C.E."/>
            <person name="Hurst L."/>
            <person name="Atkin R."/>
            <person name="Barron A."/>
            <person name="Bason N."/>
            <person name="Bentley S.D."/>
            <person name="Chillingworth C."/>
            <person name="Chillingworth T."/>
            <person name="Churcher C."/>
            <person name="Clark L."/>
            <person name="Corton C."/>
            <person name="Cronin A."/>
            <person name="Doggett J."/>
            <person name="Dowd L."/>
            <person name="Feltwell T."/>
            <person name="Hance Z."/>
            <person name="Harris B."/>
            <person name="Hauser H."/>
            <person name="Holroyd S."/>
            <person name="Jagels K."/>
            <person name="James K.D."/>
            <person name="Lennard N."/>
            <person name="Line A."/>
            <person name="Mayes R."/>
            <person name="Moule S."/>
            <person name="Mungall K."/>
            <person name="Ormond D."/>
            <person name="Quail M.A."/>
            <person name="Rabbinowitsch E."/>
            <person name="Rutherford K.M."/>
            <person name="Sanders M."/>
            <person name="Sharp S."/>
            <person name="Simmonds M."/>
            <person name="Stevens K."/>
            <person name="Whitehead S."/>
            <person name="Barrell B.G."/>
            <person name="Spratt B.G."/>
            <person name="Parkhill J."/>
        </authorList>
    </citation>
    <scope>NUCLEOTIDE SEQUENCE [LARGE SCALE GENOMIC DNA]</scope>
    <source>
        <strain>MSSA476</strain>
    </source>
</reference>
<name>MNMG_STAAS</name>
<gene>
    <name evidence="1" type="primary">mnmG</name>
    <name evidence="1" type="synonym">gidA</name>
    <name type="ordered locus">SAS2593</name>
</gene>
<proteinExistence type="inferred from homology"/>
<evidence type="ECO:0000255" key="1">
    <source>
        <dbReference type="HAMAP-Rule" id="MF_00129"/>
    </source>
</evidence>
<sequence length="625" mass="70116">MVQEYDVIVIGAGHAGVEAGLASARRGAKTLMLTINLDNIAFMPCNPSVGGPAKGIVVREIDALGGQMAKTIDKTHIQMRMLNTGKGPAVRALRAQADKVLYQQEMKRVIEDEENLHIMQGMVDELIIEDNEVKGVRTNIGTEYLSKAVIITTGTFLRGEIILGNMKYSSGPNHQLPSITLSDNLRELGFDIVRFKTGTPPRVNSKTIDYSKTEIQPGDDVGRAFSFETTEYILDQLPCWLTYTNAETHKVIDDNLHLSAMYSGMIKGTGPRYCPSIEDKFVRFNDKPRHQLFLEPEGRNTNEVYVQGLSTSLPEHVQRQMLETIPGLEKADMMRAGYAIEYDAIVPTQLWPTLETKMIKNLYTAGQINGTSGYEEAAGQGLMAGINAAGKVLNTGEKILSRSDAYIGVLIDDLVTKGTNEPYRLLTSRAEYRLLLRHDNADLRLTDMGYELGMISEERYARFNEKRQQIDAEIKRLSDIRIKPNEHTQAIIEQHGGSRLKDGILAIDLLRRPEMTYDIILEILEEEHQLNADVEEQVEIQTKYEGYINKSLQQVEKVKRMEEKKIPEDLDYSKIDSLATEAREKLSEVKPLNIAQASRISGVNPADISILLIYLEQGKLQRVSD</sequence>
<dbReference type="EMBL" id="BX571857">
    <property type="protein sequence ID" value="CAG44412.1"/>
    <property type="molecule type" value="Genomic_DNA"/>
</dbReference>
<dbReference type="RefSeq" id="WP_000249657.1">
    <property type="nucleotide sequence ID" value="NC_002953.3"/>
</dbReference>
<dbReference type="SMR" id="Q6G5W5"/>
<dbReference type="KEGG" id="sas:SAS2593"/>
<dbReference type="HOGENOM" id="CLU_007831_2_2_9"/>
<dbReference type="GO" id="GO:0005829">
    <property type="term" value="C:cytosol"/>
    <property type="evidence" value="ECO:0007669"/>
    <property type="project" value="TreeGrafter"/>
</dbReference>
<dbReference type="GO" id="GO:0050660">
    <property type="term" value="F:flavin adenine dinucleotide binding"/>
    <property type="evidence" value="ECO:0007669"/>
    <property type="project" value="UniProtKB-UniRule"/>
</dbReference>
<dbReference type="GO" id="GO:0030488">
    <property type="term" value="P:tRNA methylation"/>
    <property type="evidence" value="ECO:0007669"/>
    <property type="project" value="TreeGrafter"/>
</dbReference>
<dbReference type="GO" id="GO:0002098">
    <property type="term" value="P:tRNA wobble uridine modification"/>
    <property type="evidence" value="ECO:0007669"/>
    <property type="project" value="InterPro"/>
</dbReference>
<dbReference type="FunFam" id="1.10.10.1800:FF:000001">
    <property type="entry name" value="tRNA uridine 5-carboxymethylaminomethyl modification enzyme MnmG"/>
    <property type="match status" value="1"/>
</dbReference>
<dbReference type="FunFam" id="1.10.150.570:FF:000001">
    <property type="entry name" value="tRNA uridine 5-carboxymethylaminomethyl modification enzyme MnmG"/>
    <property type="match status" value="1"/>
</dbReference>
<dbReference type="FunFam" id="3.50.50.60:FF:000002">
    <property type="entry name" value="tRNA uridine 5-carboxymethylaminomethyl modification enzyme MnmG"/>
    <property type="match status" value="1"/>
</dbReference>
<dbReference type="FunFam" id="3.50.50.60:FF:000063">
    <property type="entry name" value="tRNA uridine 5-carboxymethylaminomethyl modification enzyme MnmG"/>
    <property type="match status" value="1"/>
</dbReference>
<dbReference type="Gene3D" id="3.50.50.60">
    <property type="entry name" value="FAD/NAD(P)-binding domain"/>
    <property type="match status" value="2"/>
</dbReference>
<dbReference type="Gene3D" id="1.10.150.570">
    <property type="entry name" value="GidA associated domain, C-terminal subdomain"/>
    <property type="match status" value="1"/>
</dbReference>
<dbReference type="Gene3D" id="1.10.10.1800">
    <property type="entry name" value="tRNA uridine 5-carboxymethylaminomethyl modification enzyme MnmG/GidA"/>
    <property type="match status" value="1"/>
</dbReference>
<dbReference type="HAMAP" id="MF_00129">
    <property type="entry name" value="MnmG_GidA"/>
    <property type="match status" value="1"/>
</dbReference>
<dbReference type="InterPro" id="IPR036188">
    <property type="entry name" value="FAD/NAD-bd_sf"/>
</dbReference>
<dbReference type="InterPro" id="IPR049312">
    <property type="entry name" value="GIDA_C_N"/>
</dbReference>
<dbReference type="InterPro" id="IPR004416">
    <property type="entry name" value="MnmG"/>
</dbReference>
<dbReference type="InterPro" id="IPR002218">
    <property type="entry name" value="MnmG-rel"/>
</dbReference>
<dbReference type="InterPro" id="IPR020595">
    <property type="entry name" value="MnmG-rel_CS"/>
</dbReference>
<dbReference type="InterPro" id="IPR026904">
    <property type="entry name" value="MnmG_C"/>
</dbReference>
<dbReference type="InterPro" id="IPR047001">
    <property type="entry name" value="MnmG_C_subdom"/>
</dbReference>
<dbReference type="InterPro" id="IPR044920">
    <property type="entry name" value="MnmG_C_subdom_sf"/>
</dbReference>
<dbReference type="InterPro" id="IPR040131">
    <property type="entry name" value="MnmG_N"/>
</dbReference>
<dbReference type="NCBIfam" id="TIGR00136">
    <property type="entry name" value="mnmG_gidA"/>
    <property type="match status" value="1"/>
</dbReference>
<dbReference type="PANTHER" id="PTHR11806">
    <property type="entry name" value="GLUCOSE INHIBITED DIVISION PROTEIN A"/>
    <property type="match status" value="1"/>
</dbReference>
<dbReference type="PANTHER" id="PTHR11806:SF0">
    <property type="entry name" value="PROTEIN MTO1 HOMOLOG, MITOCHONDRIAL"/>
    <property type="match status" value="1"/>
</dbReference>
<dbReference type="Pfam" id="PF01134">
    <property type="entry name" value="GIDA"/>
    <property type="match status" value="1"/>
</dbReference>
<dbReference type="Pfam" id="PF21680">
    <property type="entry name" value="GIDA_C_1st"/>
    <property type="match status" value="1"/>
</dbReference>
<dbReference type="Pfam" id="PF13932">
    <property type="entry name" value="SAM_GIDA_C"/>
    <property type="match status" value="1"/>
</dbReference>
<dbReference type="PRINTS" id="PR00411">
    <property type="entry name" value="PNDRDTASEI"/>
</dbReference>
<dbReference type="SMART" id="SM01228">
    <property type="entry name" value="GIDA_assoc_3"/>
    <property type="match status" value="1"/>
</dbReference>
<dbReference type="SUPFAM" id="SSF51905">
    <property type="entry name" value="FAD/NAD(P)-binding domain"/>
    <property type="match status" value="1"/>
</dbReference>
<dbReference type="PROSITE" id="PS01280">
    <property type="entry name" value="GIDA_1"/>
    <property type="match status" value="1"/>
</dbReference>
<dbReference type="PROSITE" id="PS01281">
    <property type="entry name" value="GIDA_2"/>
    <property type="match status" value="1"/>
</dbReference>
<protein>
    <recommendedName>
        <fullName evidence="1">tRNA uridine 5-carboxymethylaminomethyl modification enzyme MnmG</fullName>
    </recommendedName>
    <alternativeName>
        <fullName evidence="1">Glucose-inhibited division protein A</fullName>
    </alternativeName>
</protein>
<comment type="function">
    <text evidence="1">NAD-binding protein involved in the addition of a carboxymethylaminomethyl (cmnm) group at the wobble position (U34) of certain tRNAs, forming tRNA-cmnm(5)s(2)U34.</text>
</comment>
<comment type="cofactor">
    <cofactor evidence="1">
        <name>FAD</name>
        <dbReference type="ChEBI" id="CHEBI:57692"/>
    </cofactor>
</comment>
<comment type="subunit">
    <text evidence="1">Homodimer. Heterotetramer of two MnmE and two MnmG subunits.</text>
</comment>
<comment type="subcellular location">
    <subcellularLocation>
        <location evidence="1">Cytoplasm</location>
    </subcellularLocation>
</comment>
<comment type="similarity">
    <text evidence="1">Belongs to the MnmG family.</text>
</comment>
<keyword id="KW-0963">Cytoplasm</keyword>
<keyword id="KW-0274">FAD</keyword>
<keyword id="KW-0285">Flavoprotein</keyword>
<keyword id="KW-0520">NAD</keyword>
<keyword id="KW-0819">tRNA processing</keyword>